<evidence type="ECO:0000255" key="1">
    <source>
        <dbReference type="HAMAP-Rule" id="MF_01526"/>
    </source>
</evidence>
<accession>A7Z2Z1</accession>
<sequence length="116" mass="13573">MAVHFYDAAYDLEKALRNSDEYSRLRGLYDQVNADESAKRMFDNFRNVQLQLQQKQMSGEEITQEEVEQAQKTVALVQQHELISQLMEAEQRMSMLIGELNKIIMKPLEELYGSQQ</sequence>
<name>Y1003_BACVZ</name>
<proteinExistence type="inferred from homology"/>
<protein>
    <recommendedName>
        <fullName evidence="1">UPF0342 protein RBAM_010030</fullName>
    </recommendedName>
</protein>
<dbReference type="EMBL" id="CP000560">
    <property type="protein sequence ID" value="ABS73367.1"/>
    <property type="molecule type" value="Genomic_DNA"/>
</dbReference>
<dbReference type="RefSeq" id="WP_012117194.1">
    <property type="nucleotide sequence ID" value="NC_009725.2"/>
</dbReference>
<dbReference type="SMR" id="A7Z2Z1"/>
<dbReference type="GeneID" id="93080137"/>
<dbReference type="KEGG" id="bay:RBAM_010030"/>
<dbReference type="HOGENOM" id="CLU_140243_3_0_9"/>
<dbReference type="Proteomes" id="UP000001120">
    <property type="component" value="Chromosome"/>
</dbReference>
<dbReference type="Gene3D" id="1.20.1500.10">
    <property type="entry name" value="YheA/YmcA-like"/>
    <property type="match status" value="1"/>
</dbReference>
<dbReference type="HAMAP" id="MF_01526">
    <property type="entry name" value="UPF0342"/>
    <property type="match status" value="1"/>
</dbReference>
<dbReference type="InterPro" id="IPR010368">
    <property type="entry name" value="Com_YlbF"/>
</dbReference>
<dbReference type="InterPro" id="IPR023378">
    <property type="entry name" value="YheA/YmcA-like_dom_sf"/>
</dbReference>
<dbReference type="Pfam" id="PF06133">
    <property type="entry name" value="Com_YlbF"/>
    <property type="match status" value="1"/>
</dbReference>
<dbReference type="SUPFAM" id="SSF158622">
    <property type="entry name" value="YheA/YmcA-like"/>
    <property type="match status" value="1"/>
</dbReference>
<reference key="1">
    <citation type="journal article" date="2007" name="Nat. Biotechnol.">
        <title>Comparative analysis of the complete genome sequence of the plant growth-promoting bacterium Bacillus amyloliquefaciens FZB42.</title>
        <authorList>
            <person name="Chen X.H."/>
            <person name="Koumoutsi A."/>
            <person name="Scholz R."/>
            <person name="Eisenreich A."/>
            <person name="Schneider K."/>
            <person name="Heinemeyer I."/>
            <person name="Morgenstern B."/>
            <person name="Voss B."/>
            <person name="Hess W.R."/>
            <person name="Reva O."/>
            <person name="Junge H."/>
            <person name="Voigt B."/>
            <person name="Jungblut P.R."/>
            <person name="Vater J."/>
            <person name="Suessmuth R."/>
            <person name="Liesegang H."/>
            <person name="Strittmatter A."/>
            <person name="Gottschalk G."/>
            <person name="Borriss R."/>
        </authorList>
    </citation>
    <scope>NUCLEOTIDE SEQUENCE [LARGE SCALE GENOMIC DNA]</scope>
    <source>
        <strain>DSM 23117 / BGSC 10A6 / LMG 26770 / FZB42</strain>
    </source>
</reference>
<comment type="similarity">
    <text evidence="1">Belongs to the UPF0342 family.</text>
</comment>
<feature type="chain" id="PRO_0000316268" description="UPF0342 protein RBAM_010030">
    <location>
        <begin position="1"/>
        <end position="116"/>
    </location>
</feature>
<organism>
    <name type="scientific">Bacillus velezensis (strain DSM 23117 / BGSC 10A6 / LMG 26770 / FZB42)</name>
    <name type="common">Bacillus amyloliquefaciens subsp. plantarum</name>
    <dbReference type="NCBI Taxonomy" id="326423"/>
    <lineage>
        <taxon>Bacteria</taxon>
        <taxon>Bacillati</taxon>
        <taxon>Bacillota</taxon>
        <taxon>Bacilli</taxon>
        <taxon>Bacillales</taxon>
        <taxon>Bacillaceae</taxon>
        <taxon>Bacillus</taxon>
        <taxon>Bacillus amyloliquefaciens group</taxon>
    </lineage>
</organism>
<gene>
    <name type="ordered locus">RBAM_010030</name>
</gene>